<reference key="1">
    <citation type="journal article" date="1994" name="J. Virol.">
        <title>Nucleotide sequence of wild-type hepatitis A virus GBM in comparison with two cell culture-adapted variants.</title>
        <authorList>
            <person name="Graff J."/>
            <person name="Normann A."/>
            <person name="Feinstone S.M."/>
            <person name="Flehmig B."/>
        </authorList>
    </citation>
    <scope>NUCLEOTIDE SEQUENCE [GENOMIC RNA]</scope>
    <source>
        <strain>GBM/FRhK</strain>
        <strain>GBM/HFS</strain>
        <strain>GBM/wt</strain>
    </source>
</reference>
<name>POLG_HAVGB</name>
<comment type="function">
    <molecule>Capsid protein VP1</molecule>
    <text evidence="4">Capsid proteins VP1, VP2, and VP3 form a closed capsid enclosing the viral positive strand RNA genome. All these proteins contain a beta-sheet structure called beta-barrel jelly roll. Together they form an icosahedral capsid (T=3) composed of 60 copies of each VP1, VP2, and VP3, with a diameter of approximately 300 Angstroms. VP1 is situated at the 12 fivefold axes, whereas VP2 and VP3 are located at the quasi-sixfold axes. The naked capsid interacts with the host receptor HAVCR1 to provide virion attachment to and probably entry into the target cell.</text>
</comment>
<comment type="function">
    <molecule>Capsid protein VP2</molecule>
    <text evidence="4">Capsid proteins VP1, VP2, and VP3 form a closed capsid enclosing the viral positive strand RNA genome. All these proteins contain a beta-sheet structure called beta-barrel jelly roll. Together they form an icosahedral capsid (T=3) composed of 60 copies of each VP1, VP2, and VP3, with a diameter of approximately 300 Angstroms. VP1 is situated at the 12 fivefold axes, whereas VP2 and VP3 are located at the quasi-sixfold axes. The naked capsid interacts with the host receptor HAVCR1 to provide virion attachment to and probably entry into the target cell.</text>
</comment>
<comment type="function">
    <molecule>Capsid protein VP3</molecule>
    <text evidence="4">Capsid proteins VP1, VP2, and VP3 form a closed capsid enclosing the viral positive strand RNA genome. All these proteins contain a beta-sheet structure called beta-barrel jelly roll. Together they form an icosahedral capsid (T=3) composed of 60 copies of each VP1, VP2, and VP3, with a diameter of approximately 300 Angstroms. VP1 is situated at the 12 fivefold axes, whereas VP2 and VP3 are located at the quasi-sixfold axes. The naked capsid interacts with the host receptor HAVCR1 to provide virion attachment to and probably entry into the target cell.</text>
</comment>
<comment type="function">
    <molecule>Capsid protein VP0</molecule>
    <text evidence="4">VP0 precursor is a component of the immature procapsids.</text>
</comment>
<comment type="function">
    <molecule>Capsid protein VP4</molecule>
    <text evidence="4">Plays a role in the assembly of the 12 pentamers into an icosahedral structure. Has not been detected in mature virions, supposedly owing to its small size.</text>
</comment>
<comment type="function">
    <molecule>Protein VP1-2A</molecule>
    <text evidence="4">Precursor component of immature procapsids that corresponds to an extended form of the structural protein VP1. After maturation, possibly by the host Cathepsin L, the assembly signal 2A is cleaved to give rise to the mature VP1 protein.</text>
</comment>
<comment type="function">
    <molecule>Protein 2B</molecule>
    <text evidence="4">Functions as a viroporin. Affects membrane integrity and causes an increase in membrane permeability. Involved in host intracellular membrane rearrangements probably to give rise to the viral factories. Does not disrupt calcium homeostasis or glycoprotein trafficking. Antagonizes the innate immune response of the host by suppressing IFN-beta synthesis, which it achieves by interfering with the RIG-I/IFIH1 pathway.</text>
</comment>
<comment type="function">
    <molecule>Protein 2BC</molecule>
    <text evidence="4">Affects membrane integrity and causes an increase in membrane permeability.</text>
</comment>
<comment type="function">
    <molecule>Protein 2C</molecule>
    <text evidence="4">Associates with and induces structural rearrangements of intracellular membranes. Displays RNA-binding activity.</text>
</comment>
<comment type="function">
    <molecule>Protein 3ABC</molecule>
    <text evidence="4">The precursor 3ABC is targeted to the mitochondrial membrane where protease 3C activity cleaves and inhibits the host antiviral protein MAVS, thereby disrupting activation of IRF3 through the IFIH1/MDA5 pathway. In vivo, the protease activity of 3ABC precursor is more efficient in cleaving the 2BC precursor than that of protein 3C. The 3ABC precursor may therefore play a role in the proteolytic processing of the polyprotein. Possible viroporin.</text>
</comment>
<comment type="function">
    <molecule>Protein 3AB</molecule>
    <text evidence="4">Interacts with the 3CD precursor and with RNA structures found at both the 5'- and 3'-termini of the viral genome. Since the 3AB precursor contains the hydrophobic domain 3A, it probably anchors the whole viral replicase complex to intracellular membranes on which viral RNA synthesis occurs.</text>
</comment>
<comment type="function">
    <molecule>Protein 3A</molecule>
    <text evidence="4">May serve as membrane anchor to the 3AB and 3ABC precursors via its hydrophobic domain. May interact with RNA.</text>
</comment>
<comment type="function">
    <molecule>Viral protein genome-linked</molecule>
    <text evidence="2 4">Acts as a primer for viral RNA replication and remains covalently bound to viral genomic RNA. VPg is uridylylated prior to priming replication into VPg-pUpU. The VPg-pUpU is then used as primer on the genomic RNA poly(A) by the RNA-dependent RNA polymerase to replicate the viral genome.</text>
</comment>
<comment type="function">
    <molecule>Protease 3C</molecule>
    <text evidence="4">Cysteine protease that generates mature viral proteins from the precursor polyprotein. In addition to its proteolytic activity, it binds to viral RNA, and thus influences viral genome replication. RNA and substrate bind cooperatively to the protease. Cleaves IKBKG/NEMO to impair innate immune signaling. Cleaves host PABPC1 which may participate in the switch of viral translation to RNA synthesis.</text>
</comment>
<comment type="function">
    <molecule>Protein 3CD</molecule>
    <text evidence="4">Interacts with the 3AB precursor and with RNA structures found at both the 5'- and 3'-termini of the viral genome. Disrupts TLR3 signaling by degrading the host adapter protein TICAM1/TRIF.</text>
</comment>
<comment type="function">
    <text evidence="4">RNA-directed RNA polymerase 3D-POL replicates genomic and antigenomic RNA by recognizing replications specific signals.</text>
</comment>
<comment type="catalytic activity">
    <reaction evidence="4 6">
        <text>RNA(n) + a ribonucleoside 5'-triphosphate = RNA(n+1) + diphosphate</text>
        <dbReference type="Rhea" id="RHEA:21248"/>
        <dbReference type="Rhea" id="RHEA-COMP:14527"/>
        <dbReference type="Rhea" id="RHEA-COMP:17342"/>
        <dbReference type="ChEBI" id="CHEBI:33019"/>
        <dbReference type="ChEBI" id="CHEBI:61557"/>
        <dbReference type="ChEBI" id="CHEBI:140395"/>
        <dbReference type="EC" id="2.7.7.48"/>
    </reaction>
</comment>
<comment type="catalytic activity">
    <reaction evidence="4">
        <text>a ribonucleoside 5'-triphosphate + H2O = a ribonucleoside 5'-diphosphate + phosphate + H(+)</text>
        <dbReference type="Rhea" id="RHEA:23680"/>
        <dbReference type="ChEBI" id="CHEBI:15377"/>
        <dbReference type="ChEBI" id="CHEBI:15378"/>
        <dbReference type="ChEBI" id="CHEBI:43474"/>
        <dbReference type="ChEBI" id="CHEBI:57930"/>
        <dbReference type="ChEBI" id="CHEBI:61557"/>
        <dbReference type="EC" id="3.6.1.15"/>
    </reaction>
</comment>
<comment type="catalytic activity">
    <reaction evidence="8">
        <text>Selective cleavage of Gln-|-Gly bond in the poliovirus polyprotein. In other picornavirus reactions Glu may be substituted for Gln, and Ser or Thr for Gly.</text>
        <dbReference type="EC" id="3.4.22.28"/>
    </reaction>
</comment>
<comment type="subunit">
    <molecule>Protein 2B</molecule>
    <text evidence="4">Homodimer. Homomultimer; probably interacts with membranes in a multimeric form. Seems to assemble into amyloid-like fibers.</text>
</comment>
<comment type="subunit">
    <molecule>Protein 3AB</molecule>
    <text evidence="4">Homodimer. Monomer. Interacts with protein 3CD.</text>
</comment>
<comment type="subunit">
    <molecule>Protein 3A</molecule>
    <text evidence="4">Interacts with host ACBD3 (By similarity).</text>
</comment>
<comment type="subunit">
    <molecule>Protein 3CD</molecule>
    <text evidence="4">Interacts with protein 3AB.</text>
</comment>
<comment type="subunit">
    <molecule>Protein 3ABC</molecule>
    <text evidence="4">Interacts with human MAVS.</text>
</comment>
<comment type="subunit">
    <molecule>Protease 3C</molecule>
    <text evidence="4">Homodimer; disulfide-linked.</text>
</comment>
<comment type="subunit">
    <molecule>Protein VP1-2A</molecule>
    <text evidence="4">Homopentamer. Homooligomer.</text>
</comment>
<comment type="subunit">
    <molecule>Capsid protein VP1</molecule>
    <text evidence="4">Interacts with capsid protein VP2. Interacts with capsid protein VP3.</text>
</comment>
<comment type="subunit">
    <molecule>Capsid protein VP2</molecule>
    <text evidence="4">Interacts with capsid protein VP1. Interacts with capsid protein VP3.</text>
</comment>
<comment type="subunit">
    <molecule>Capsid protein VP3</molecule>
    <text evidence="4">Interacts with capsid protein VP1. Interacts with capsid protein VP2.</text>
</comment>
<comment type="subcellular location">
    <molecule>Capsid protein VP2</molecule>
    <subcellularLocation>
        <location evidence="4">Virion</location>
    </subcellularLocation>
    <subcellularLocation>
        <location evidence="4">Host endosome</location>
        <location evidence="4">Host multivesicular body</location>
    </subcellularLocation>
    <text evidence="4">The egress of newly formed virions occurs through an exosome-like mechanism involving endosomal budding of viral capsids into multivesicular bodies.</text>
</comment>
<comment type="subcellular location">
    <molecule>Capsid protein VP3</molecule>
    <subcellularLocation>
        <location evidence="4">Virion</location>
    </subcellularLocation>
    <subcellularLocation>
        <location evidence="4">Host endosome</location>
        <location evidence="4">Host multivesicular body</location>
    </subcellularLocation>
    <text evidence="4">The egress of newly formed virions occurs through an exosome-like mechanism involving endosomal budding of viral capsids into multivesicular bodies.</text>
</comment>
<comment type="subcellular location">
    <molecule>Capsid protein VP1</molecule>
    <subcellularLocation>
        <location evidence="4">Virion</location>
    </subcellularLocation>
    <subcellularLocation>
        <location evidence="4">Host endosome</location>
        <location evidence="4">Host multivesicular body</location>
    </subcellularLocation>
    <text evidence="4">The egress of newly formed virions occurs through an exosome-like mechanism involving endosomal budding of viral capsids into multivesicular bodies.</text>
</comment>
<comment type="subcellular location">
    <molecule>Capsid protein VP4</molecule>
    <subcellularLocation>
        <location evidence="4">Virion</location>
    </subcellularLocation>
    <text evidence="4">Present in the full mature virion. The egress of newly formed virions occurs through an exosome-like mechanism involving endosomal budding of viral capsids into multivesicular bodies.</text>
</comment>
<comment type="subcellular location">
    <molecule>Protein 2B</molecule>
    <subcellularLocation>
        <location evidence="4">Host membrane</location>
        <topology evidence="4">Peripheral membrane protein</topology>
    </subcellularLocation>
    <text evidence="4">Probably localizes to intracellular membrane vesicles that are induced after virus infection as the site for viral RNA replication.</text>
</comment>
<comment type="subcellular location">
    <molecule>Protein 2C</molecule>
    <subcellularLocation>
        <location evidence="4">Host membrane</location>
        <topology evidence="4">Single-pass membrane protein</topology>
    </subcellularLocation>
    <text evidence="4">Probably localizes to intracellular membrane vesicles that are induced after virus infection as the site for viral RNA replication. May associate with membranes through a N-terminal amphipathic helix.</text>
</comment>
<comment type="subcellular location">
    <molecule>Protein 3ABC</molecule>
    <subcellularLocation>
        <location evidence="4">Host membrane</location>
        <topology evidence="5">Single-pass membrane protein</topology>
    </subcellularLocation>
    <subcellularLocation>
        <location evidence="4">Host mitochondrion outer membrane</location>
        <topology evidence="4">Single-pass membrane protein</topology>
    </subcellularLocation>
    <text evidence="4">Probably localizes to intracellular membrane vesicles that are induced after virus infection as the site for viral RNA replication.</text>
</comment>
<comment type="subcellular location">
    <molecule>Protein 3AB</molecule>
    <subcellularLocation>
        <location evidence="4">Host membrane</location>
        <topology evidence="5">Single-pass membrane protein</topology>
    </subcellularLocation>
    <text evidence="4">Probably localizes to intracellular membrane vesicles that are induced after virus infection as the site for viral RNA replication.</text>
</comment>
<comment type="subcellular location">
    <molecule>Protein 3A</molecule>
    <subcellularLocation>
        <location evidence="4">Host membrane</location>
        <topology evidence="5">Single-pass membrane protein</topology>
    </subcellularLocation>
    <text evidence="4">Probably localizes to intracellular membrane vesicles that are induced after virus infection as the site for viral RNA replication.</text>
</comment>
<comment type="subcellular location">
    <molecule>Viral protein genome-linked</molecule>
    <subcellularLocation>
        <location evidence="4">Virion</location>
    </subcellularLocation>
</comment>
<comment type="subcellular location">
    <molecule>Protease 3C</molecule>
    <subcellularLocation>
        <location evidence="4">Host cytoplasm</location>
    </subcellularLocation>
</comment>
<comment type="subcellular location">
    <molecule>RNA-directed RNA polymerase 3D-POL</molecule>
    <subcellularLocation>
        <location evidence="4">Host cytoplasmic vesicle membrane</location>
        <topology evidence="4">Peripheral membrane protein</topology>
        <orientation evidence="4">Cytoplasmic side</orientation>
    </subcellularLocation>
    <text evidence="4">Interacts with membranes in a complex with viral protein 3AB. Probably localizes to the surface of intracellular membrane vesicles that are induced after virus infection as the site for viral RNA replication. These vesicles are derived from the endoplasmic reticulum.</text>
</comment>
<comment type="domain">
    <molecule>Protein VP1-2A</molecule>
    <text evidence="4">The assembly signal 2A region mediates pentamerization of P1-2A.</text>
</comment>
<comment type="domain">
    <molecule>Genome polyprotein</molecule>
    <text evidence="4">Late-budding domains (L domains) are short sequence motifs essential for viral particle budding. They recruit proteins of the host ESCRT machinery (Endosomal Sorting Complex Required for Transport) or ESCRT-associated proteins. The genome polyprotein contains two L domains: a tandem of (L)YPX(n)L domain which is known to bind the PDCD6IP/ALIX adaptater protein.</text>
</comment>
<comment type="domain">
    <molecule>Capsid protein VP2</molecule>
    <text evidence="4">Late-budding domains (L domains) are short sequence motifs essential for viral particle budding. They recruit proteins of the host ESCRT machinery (Endosomal Sorting Complex Required for Transport) or ESCRT-associated proteins. Capsid protein VP2 contains two L domains: a tandem of (L)YPX(n)L domain which is known to bind the Alix adaptater protein.</text>
</comment>
<comment type="domain">
    <molecule>Protein 2B</molecule>
    <text evidence="4">The C-terminus displays a membrane-penetrating ability.</text>
</comment>
<comment type="PTM">
    <molecule>Genome polyprotein</molecule>
    <text evidence="4">Specific enzymatic cleavages by viral protease in vivo yield a variety of precursors and mature proteins. Polyprotein processing intermediates are produced, such as P1-2A which is a functional precursor of the structural proteins, VP0 which is a VP4-VP2 precursor, VP1-2A precursor, 3ABC precursor which is a stable and catalytically active precursor of 3A, 3B and 3C proteins, 3AB and 3CD precursors. The assembly signal 2A is removed from VP1-2A by a host protease, possibly host Cathepsin L. This cleavage occurs over a region of 3 amino-acids probably generating VP1 proteins with heterogeneous C-termini.</text>
</comment>
<comment type="PTM">
    <molecule>Capsid protein VP0</molecule>
    <text evidence="3">During virion maturation, immature virions are rendered infectious following cleavage of VP0 into VP4 and VP2. This maturation seems to be an autocatalytic event triggered by the presence of RNA in the capsid and is followed by a conformational change of the particle.</text>
</comment>
<comment type="PTM">
    <molecule>Protein VP1-2A</molecule>
    <text evidence="4">The assembly signal 2A is removed from VP1-2A by a host protease, possibly host Cathepsin L in naked virions. This cleavage does not occur in enveloped virions. This cleavage occurs over a region of 3 amino-acids probably generating VP1 proteins with heterogeneous C-termini.</text>
</comment>
<comment type="PTM">
    <molecule>Viral protein genome-linked</molecule>
    <text evidence="2">VPg is uridylylated prior to priming replication into VPg-pUpU.</text>
</comment>
<comment type="PTM">
    <molecule>Capsid protein VP4</molecule>
    <text evidence="4">Unlike other picornaviruses, does not seem to be myristoylated.</text>
</comment>
<comment type="miscellaneous">
    <molecule>Genome polyprotein</molecule>
    <text evidence="4">The need for an intact eIF4G factor for the initiation of translation of HAV results in an inability to shut off host protein synthesis by a mechanism similar to that of other picornaviruses.</text>
</comment>
<comment type="miscellaneous">
    <molecule>Genome polyprotein</molecule>
    <text evidence="4">During infection, enveloped virions (eHAV) are released from cells. These eHAV are cloaked in host-derived membranes and resemble exosomes. The membrane of eHAV is devoid of viral proteins and thus prevents their neutralization by antibodies. eHAV budding is dependent on ESCRT-associated proteins VPS4B and PDCD6IP/ALIX. eHAV are produced and released in the serum and plasma, but not in bile and feces which only contain the naked, nonenveloped virions. It is likely that eHAV also use HAVCR1 as a functional receptor to infect cells, an evolutionary trait that may enhance HAV infectivity.</text>
</comment>
<comment type="similarity">
    <text evidence="9">Belongs to the picornaviridae polyprotein family.</text>
</comment>
<comment type="caution">
    <text evidence="4">It is uncertain whether Met-1 or Met-3 is the initiator.</text>
</comment>
<proteinExistence type="inferred from homology"/>
<organismHost>
    <name type="scientific">Homo sapiens</name>
    <name type="common">Human</name>
    <dbReference type="NCBI Taxonomy" id="9606"/>
</organismHost>
<sequence length="2227" mass="251565">MNMSKQGIFQTVGSGLDHILSLADIEEEQMIQSVDRTAVTGASYFTSVDQSSVHTAEVGSHQIEPLKTSVDKPGSKKTQGEKFFLIHSADWLTTHALFHEVAKLDVVKLLYNEQFAVQGLLRYHTYARFGIEIQVQINPTPFSQGGLICAMVPGDQSYGSIASLTVYPHGLLNCNINNVVRIKVPFIYTRGAYHFKDPQYPVWELTIRVWSELNIGTGTSAYTSLNVLARFTDLELHGLTPLSTQMMRNEFRVSTTENVVNLSNYEDARAKMSFALDQEDWKSDPSQGGGIKITHFTTWTSIPTLAAQFPFNASDSVGQQIKVIPVDPYFFQMTNTNPDQKCITALASICQMFCFWRGDLVFDFQVFPTKYHSGRLLFCFVPGNELIDVTGITLKQATTAPCAVMDITGVQSTLRFRVPWISDTPYRVNRYTKSAHQKGEYTAIGKLIVYCYNRLTSPSNVASHVRVNVYLSAINLECFAPLYHAMDVTTQVGDDSGGFSTTVSTEQNVPDPQVGIITMRDLKGKANRGKMDVSGVQAPVGAITTIEDPVLAKKVPETFPELKPGESRHTSDHMSIYKFMGRSHFLCTFIFNSNNKEYTFPITLSSTSNPPHGLPSTLRWFFNLFQLYRGPLDLTIIITGATDVDGMAWFTPVGLAVDTPWVEKESALSIDYKTALGAVRFNTRRTGNIQIRLPWYSYLYAVSGALDGLGDKTDSTFGLVSIQIANYNHSDEYLSFSCYLSVTEQSEFYFPRAPLNSNAMLSTESMMSRIAAGDLESSVDDPRSEEDRRFESHIECRKPYKELRLEVGKQRLKYAQEELSNEVLPPPRKMKGVFSQAKISLFYTEEHEIMKFSWRGVTADTRALRRFGFSMAAGRSVWTLEMDAGVLTGRLVRLNDEKWTEMKDDKIVSLIEKFTSNKYWSKVNFPHGMLDLEEIAANSKDFPNMSETDLCFLLHWLNPKKINLADRMLGLSGVQEIKEQGVGLIAECRTFLDSIAGTLKSMMFGFHHSVTVEIINTVLCFVKSGILLYVIQQLNQDEHSHIIGLLRVMNYVDIGCSVISCGKVFSKMLETVFNWQMDSRMMELRTQSFSNWLRDICSGITIFKSFKDAIYWLYTKLKDFYEVNYGKKKDVLNILKDNRQKIEKAIEEADNLCILQIQDVEKFDQYQKGVDLIQKLRTVHSMAQVDPNLGVHLSPLRDCIARVHQKLKNLGSINQAMVTRCEPVVCYLIGKRGGGKSLTSIALATKICKHYGVEPEKNIYTKPVASDYWDGYSGQLVCIIDDIGQNTTDEDWSDFCQLVSGCPMRLNMASLEEKGRHFSSPFIIATSNWSNPSPKTVYVKEAIDRRLHFKVEVKPASFFKNPHNDMLNVNLAKTNDAIKDMSCVDLIMDGHNISLMDLLSSLVMTVEIRKQNMSEFMELWSQGISDYDNDSAVAEFFQSFPSGKPSNSKLSSFFQSVTNHKWVAVGAAVGILGVLVAGWFVYRHFSRKEEEPIPTEGVYYGVTKPKQVIKLDADPVESQSPLEIAGLVRKNLVQFGVGEKNGCVRWVMNALGVKDDWLLVPSHAYKFEKDYEMMEFYFNRGGTYYSISAGNVVIQSLDVGFQDVVLMKVPTIPKFRDITQHFIKKGDVPRALNRLATLVTTVNGTPMLISEGPLKMEEKATYVHKKNDGTTVDLTVDQAWRGKGEGLPGMCGGALVSSNQSIQNAILGIHVAGGNSILVAKLVTQEMFQNIDKKIESQRIMKVEFSQCSMNVVSKTLFRKSPIHHHIDKTMINFPAALPFSKAEIDPMAIMLSKYSLPIVEEPEDYKEASVFYQNKIVGKTQLVDDFLDLDMAITGAPGIDAINMDSSPGFPYVQEKLTKRDLIWLDENGLLLGVHPRLAQRILFNTVMMENCSDLDVVFTTCPKDELRPLEKVLESKTRAIDACPLDYTILCRMYWGPAISYFHLNPGFHTGVAIGIDPDRQWDELFKTMIRFGDVGLDLDFSAFDASLSPFMIREAGRIMSELSGTPSHFGTALINTIIYSKHLLYNCCYHVYGSMPSGSPCTALLNSIINNINLYYVFSKIFGKSPVFFCQALRILCYGDDVLIVFSRDVQIDNLDLIGQKIVDEFRKLGMTATSADKNVPQLKPVSELTFLKRSFNLVEDRIRPAISEKTIWSLIAWQRGNAEFEQNLENAQWFAFMHGYEFYQKFYYFVQSCLEKEMIEYRLKSYDWWRMRFYDQCFICDLS</sequence>
<evidence type="ECO:0000250" key="1"/>
<evidence type="ECO:0000250" key="2">
    <source>
        <dbReference type="UniProtKB" id="P03300"/>
    </source>
</evidence>
<evidence type="ECO:0000250" key="3">
    <source>
        <dbReference type="UniProtKB" id="P03303"/>
    </source>
</evidence>
<evidence type="ECO:0000250" key="4">
    <source>
        <dbReference type="UniProtKB" id="P08617"/>
    </source>
</evidence>
<evidence type="ECO:0000255" key="5"/>
<evidence type="ECO:0000255" key="6">
    <source>
        <dbReference type="PROSITE-ProRule" id="PRU00539"/>
    </source>
</evidence>
<evidence type="ECO:0000255" key="7">
    <source>
        <dbReference type="PROSITE-ProRule" id="PRU00551"/>
    </source>
</evidence>
<evidence type="ECO:0000255" key="8">
    <source>
        <dbReference type="PROSITE-ProRule" id="PRU01222"/>
    </source>
</evidence>
<evidence type="ECO:0000305" key="9"/>
<accession>Q67825</accession>
<accession>Q67824</accession>
<accession>Q67826</accession>
<organism>
    <name type="scientific">Human hepatitis A virus genotype IA (isolate GBM)</name>
    <name type="common">HHAV</name>
    <name type="synonym">Human hepatitis A virus (isolate Human/Germany/GBM/1976)</name>
    <dbReference type="NCBI Taxonomy" id="470422"/>
    <lineage>
        <taxon>Viruses</taxon>
        <taxon>Riboviria</taxon>
        <taxon>Orthornavirae</taxon>
        <taxon>Pisuviricota</taxon>
        <taxon>Pisoniviricetes</taxon>
        <taxon>Picornavirales</taxon>
        <taxon>Picornaviridae</taxon>
        <taxon>Heptrevirinae</taxon>
        <taxon>Hepatovirus</taxon>
        <taxon>Hepatovirus ahepa</taxon>
        <taxon>Hepatovirus A</taxon>
    </lineage>
</organism>
<protein>
    <recommendedName>
        <fullName>Genome polyprotein</fullName>
    </recommendedName>
    <component>
        <recommendedName>
            <fullName>Capsid protein VP0</fullName>
        </recommendedName>
        <alternativeName>
            <fullName>VP4-VP2</fullName>
        </alternativeName>
    </component>
    <component>
        <recommendedName>
            <fullName>Capsid protein VP4</fullName>
        </recommendedName>
        <alternativeName>
            <fullName>P1A</fullName>
        </alternativeName>
        <alternativeName>
            <fullName>Virion protein 4</fullName>
        </alternativeName>
    </component>
    <component>
        <recommendedName>
            <fullName>Capsid protein VP2</fullName>
        </recommendedName>
        <alternativeName>
            <fullName>P1B</fullName>
        </alternativeName>
        <alternativeName>
            <fullName>Virion protein 2</fullName>
        </alternativeName>
    </component>
    <component>
        <recommendedName>
            <fullName>Capsid protein VP3</fullName>
        </recommendedName>
        <alternativeName>
            <fullName>P1C</fullName>
        </alternativeName>
        <alternativeName>
            <fullName>Virion protein 3</fullName>
        </alternativeName>
    </component>
    <component>
        <recommendedName>
            <fullName>Protein VP1-2A</fullName>
        </recommendedName>
        <alternativeName>
            <fullName>VPX</fullName>
        </alternativeName>
    </component>
    <component>
        <recommendedName>
            <fullName>Capsid protein VP1</fullName>
        </recommendedName>
        <alternativeName>
            <fullName>P1D</fullName>
        </alternativeName>
        <alternativeName>
            <fullName>Virion protein 1</fullName>
        </alternativeName>
    </component>
    <component>
        <recommendedName>
            <fullName>Assembly signal 2A</fullName>
        </recommendedName>
        <alternativeName>
            <fullName evidence="4">pX</fullName>
        </alternativeName>
    </component>
    <component>
        <recommendedName>
            <fullName>Protein 2BC</fullName>
        </recommendedName>
    </component>
    <component>
        <recommendedName>
            <fullName>Protein 2B</fullName>
            <shortName>P2B</shortName>
        </recommendedName>
    </component>
    <component>
        <recommendedName>
            <fullName>Protein 2C</fullName>
            <shortName>P2C</shortName>
            <ecNumber>3.6.1.15</ecNumber>
        </recommendedName>
    </component>
    <component>
        <recommendedName>
            <fullName>Protein 3ABCD</fullName>
            <shortName>P3</shortName>
        </recommendedName>
    </component>
    <component>
        <recommendedName>
            <fullName>Protein 3ABC</fullName>
        </recommendedName>
    </component>
    <component>
        <recommendedName>
            <fullName>Protein 3AB</fullName>
        </recommendedName>
    </component>
    <component>
        <recommendedName>
            <fullName>Protein 3A</fullName>
            <shortName>P3A</shortName>
        </recommendedName>
    </component>
    <component>
        <recommendedName>
            <fullName>Viral protein genome-linked</fullName>
            <shortName>VPg</shortName>
        </recommendedName>
        <alternativeName>
            <fullName>Protein 3B</fullName>
            <shortName>P3B</shortName>
        </alternativeName>
    </component>
    <component>
        <recommendedName>
            <fullName>Protein 3CD</fullName>
        </recommendedName>
    </component>
    <component>
        <recommendedName>
            <fullName>Protease 3C</fullName>
            <shortName>P3C</shortName>
            <ecNumber evidence="4">3.4.22.28</ecNumber>
        </recommendedName>
        <alternativeName>
            <fullName>Picornain 3C</fullName>
        </alternativeName>
    </component>
    <component>
        <recommendedName>
            <fullName>RNA-directed RNA polymerase 3D-POL</fullName>
            <shortName>P3D-POL</shortName>
            <ecNumber evidence="4">2.7.7.48</ecNumber>
        </recommendedName>
    </component>
</protein>
<feature type="chain" id="PRO_0000310618" description="Genome polyprotein">
    <location>
        <begin position="1"/>
        <end position="2227"/>
    </location>
</feature>
<feature type="chain" id="PRO_0000310619" description="Capsid protein VP0">
    <location>
        <begin position="1"/>
        <end position="245"/>
    </location>
</feature>
<feature type="chain" id="PRO_0000310620" description="Capsid protein VP4">
    <location>
        <begin position="1"/>
        <end position="23"/>
    </location>
</feature>
<feature type="chain" id="PRO_0000310621" description="Capsid protein VP2">
    <location>
        <begin position="24"/>
        <end position="245"/>
    </location>
</feature>
<feature type="chain" id="PRO_0000310622" description="Capsid protein VP3">
    <location>
        <begin position="246"/>
        <end position="491"/>
    </location>
</feature>
<feature type="chain" id="PRO_0000310623" description="Protein VP1-2A">
    <location>
        <begin position="492"/>
        <end position="836"/>
    </location>
</feature>
<feature type="chain" id="PRO_0000310624" description="Capsid protein VP1">
    <location>
        <begin position="492"/>
        <end position="765"/>
    </location>
</feature>
<feature type="chain" id="PRO_0000310625" description="Assembly signal 2A">
    <location>
        <begin position="766"/>
        <end position="836"/>
    </location>
</feature>
<feature type="chain" id="PRO_0000310626" description="Protein 2BC">
    <location>
        <begin position="837"/>
        <end position="1422"/>
    </location>
</feature>
<feature type="chain" id="PRO_0000310627" description="Protein 2B">
    <location>
        <begin position="837"/>
        <end position="1087"/>
    </location>
</feature>
<feature type="chain" id="PRO_0000310628" description="Protein 2C">
    <location>
        <begin position="1088"/>
        <end position="1422"/>
    </location>
</feature>
<feature type="chain" id="PRO_5000146143" description="Protein 3ABCD">
    <location>
        <begin position="1423"/>
        <end position="2227"/>
    </location>
</feature>
<feature type="chain" id="PRO_0000310629" description="Protein 3ABC">
    <location>
        <begin position="1423"/>
        <end position="1738"/>
    </location>
</feature>
<feature type="chain" id="PRO_0000310630" description="Protein 3AB">
    <location>
        <begin position="1423"/>
        <end position="1519"/>
    </location>
</feature>
<feature type="chain" id="PRO_0000310631" description="Protein 3A">
    <location>
        <begin position="1423"/>
        <end position="1496"/>
    </location>
</feature>
<feature type="chain" id="PRO_0000310632" description="Viral protein genome-linked">
    <location>
        <begin position="1497"/>
        <end position="1519"/>
    </location>
</feature>
<feature type="chain" id="PRO_0000310633" description="Protein 3CD">
    <location>
        <begin position="1520"/>
        <end position="2227"/>
    </location>
</feature>
<feature type="chain" id="PRO_0000310634" description="Protease 3C">
    <location>
        <begin position="1520"/>
        <end position="1738"/>
    </location>
</feature>
<feature type="chain" id="PRO_0000310635" description="RNA-directed RNA polymerase 3D-POL">
    <location>
        <begin position="1739"/>
        <end position="2227"/>
    </location>
</feature>
<feature type="transmembrane region" description="Helical" evidence="5">
    <location>
        <begin position="1011"/>
        <end position="1031"/>
    </location>
</feature>
<feature type="transmembrane region" description="Helical" evidence="5">
    <location>
        <begin position="1462"/>
        <end position="1482"/>
    </location>
</feature>
<feature type="domain" description="SF3 helicase" evidence="7">
    <location>
        <begin position="1204"/>
        <end position="1366"/>
    </location>
</feature>
<feature type="domain" description="Peptidase C3" evidence="8">
    <location>
        <begin position="1514"/>
        <end position="1728"/>
    </location>
</feature>
<feature type="domain" description="RdRp catalytic" evidence="6">
    <location>
        <begin position="1976"/>
        <end position="2097"/>
    </location>
</feature>
<feature type="region of interest" description="Involved in P1-2A pentamerization" evidence="4">
    <location>
        <begin position="766"/>
        <end position="836"/>
    </location>
</feature>
<feature type="region of interest" description="Membrane-penetrating ability" evidence="4">
    <location>
        <begin position="1043"/>
        <end position="1070"/>
    </location>
</feature>
<feature type="coiled-coil region" evidence="5">
    <location>
        <begin position="1127"/>
        <end position="1155"/>
    </location>
</feature>
<feature type="short sequence motif" description="(L)YPX(n)L motif" evidence="4">
    <location>
        <begin position="167"/>
        <end position="171"/>
    </location>
</feature>
<feature type="short sequence motif" description="(L)YPX(n)L motif" evidence="4">
    <location>
        <begin position="200"/>
        <end position="205"/>
    </location>
</feature>
<feature type="active site" description="For protease 3C activity" evidence="8">
    <location>
        <position position="1563"/>
    </location>
</feature>
<feature type="active site" description="For protease 3C activity" evidence="8">
    <location>
        <position position="1603"/>
    </location>
</feature>
<feature type="active site" description="For protease 3C activity" evidence="8">
    <location>
        <position position="1691"/>
    </location>
</feature>
<feature type="binding site" evidence="7">
    <location>
        <begin position="1230"/>
        <end position="1237"/>
    </location>
    <ligand>
        <name>ATP</name>
        <dbReference type="ChEBI" id="CHEBI:30616"/>
    </ligand>
</feature>
<feature type="site" description="Cleavage" evidence="5">
    <location>
        <begin position="23"/>
        <end position="24"/>
    </location>
</feature>
<feature type="site" description="Cleavage; by protease 3C" evidence="4">
    <location>
        <begin position="245"/>
        <end position="246"/>
    </location>
</feature>
<feature type="site" description="Cleavage; by protease 3C" evidence="4">
    <location>
        <begin position="491"/>
        <end position="492"/>
    </location>
</feature>
<feature type="site" description="Cleavage; partial; by host" evidence="4">
    <location>
        <begin position="765"/>
        <end position="766"/>
    </location>
</feature>
<feature type="site" description="Important for VP1 folding and capsid assembly" evidence="4">
    <location>
        <position position="769"/>
    </location>
</feature>
<feature type="site" description="Cleavage; by protease 3C" evidence="4">
    <location>
        <begin position="836"/>
        <end position="837"/>
    </location>
</feature>
<feature type="site" description="Cleavage; by protease 3C" evidence="4">
    <location>
        <begin position="1087"/>
        <end position="1088"/>
    </location>
</feature>
<feature type="site" description="Cleavage; by protease 3C" evidence="4">
    <location>
        <begin position="1422"/>
        <end position="1423"/>
    </location>
</feature>
<feature type="site" description="Cleavage; by protease 3C" evidence="4">
    <location>
        <begin position="1496"/>
        <end position="1497"/>
    </location>
</feature>
<feature type="site" description="Cleavage; by protease 3C" evidence="4">
    <location>
        <begin position="1519"/>
        <end position="1520"/>
    </location>
</feature>
<feature type="site" description="Cleavage; by protease 3C" evidence="4">
    <location>
        <begin position="1738"/>
        <end position="1739"/>
    </location>
</feature>
<feature type="modified residue" description="O-(5'-phospho-RNA)-tyrosine" evidence="1">
    <location>
        <position position="1499"/>
    </location>
</feature>
<feature type="disulfide bond" description="Interchain" evidence="4">
    <location>
        <position position="1543"/>
    </location>
</feature>
<feature type="sequence variant" description="In strain: GBM/HFS and GBM/FRhK.">
    <original>S</original>
    <variation>Q</variation>
    <location>
        <position position="143"/>
    </location>
</feature>
<feature type="sequence variant" description="In strain: GBM/FRhK.">
    <location>
        <begin position="517"/>
        <end position="522"/>
    </location>
</feature>
<feature type="sequence variant" description="In strain: GBM/HFS.">
    <original>I</original>
    <variation>T</variation>
    <location>
        <position position="517"/>
    </location>
</feature>
<feature type="sequence variant" description="In strain: GBM/HFS and GBM/FRhK.">
    <original>I</original>
    <variation>T</variation>
    <location>
        <position position="590"/>
    </location>
</feature>
<feature type="sequence variant" description="In strain: GBM/FRhK.">
    <original>M</original>
    <variation>I</variation>
    <location>
        <position position="647"/>
    </location>
</feature>
<feature type="sequence variant" description="In strain: GBM/FRhK.">
    <original>D</original>
    <variation>H</variation>
    <location>
        <position position="707"/>
    </location>
</feature>
<feature type="sequence variant" description="In strain: GBM/FRhK.">
    <original>I</original>
    <variation>V</variation>
    <location>
        <position position="1014"/>
    </location>
</feature>
<feature type="sequence variant" description="In strain: GBM/HFS.">
    <original>V</original>
    <variation>A</variation>
    <location>
        <position position="1052"/>
    </location>
</feature>
<feature type="sequence variant" description="In strain: GBM/FRhK.">
    <original>K</original>
    <variation>Q</variation>
    <location>
        <position position="1118"/>
    </location>
</feature>
<feature type="sequence variant" description="In strain: GBM/FRhK and GBM/HFS.">
    <original>R</original>
    <variation>Q</variation>
    <location>
        <position position="1139"/>
    </location>
</feature>
<feature type="sequence variant" description="In strain: GBM/HFS and GBM/FRhK.">
    <original>L</original>
    <variation>F</variation>
    <location>
        <position position="1152"/>
    </location>
</feature>
<feature type="sequence variant" description="In strain: GBM/HFS and GBM/FRhK.">
    <original>I</original>
    <variation>Y</variation>
    <location>
        <position position="1229"/>
    </location>
</feature>
<feature type="sequence variant" description="In strain: GBM/FRhK.">
    <original>K</original>
    <variation>T</variation>
    <location>
        <position position="1231"/>
    </location>
</feature>
<feature type="sequence variant" description="In strain: GBM/FRhK.">
    <original>N</original>
    <variation>S</variation>
    <location>
        <position position="1375"/>
    </location>
</feature>
<feature type="sequence variant" description="In strain: GBM/FRhK.">
    <location>
        <begin position="1427"/>
        <end position="1429"/>
    </location>
</feature>
<feature type="sequence variant" description="In strain: GBM/HFS.">
    <original>Y</original>
    <variation>D</variation>
    <location>
        <position position="1427"/>
    </location>
</feature>
<feature type="sequence variant" description="In strain: GBM/HFS and GBM/FRhK.">
    <original>K</original>
    <variation>E</variation>
    <location>
        <position position="1444"/>
    </location>
</feature>
<feature type="sequence variant" description="In strain: GBM/HFS.">
    <original>A</original>
    <variation>G</variation>
    <location>
        <position position="1477"/>
    </location>
</feature>
<feature type="sequence variant" description="In strain: GBM/HFS and GBM/FRhK.">
    <original>T</original>
    <variation>A</variation>
    <location>
        <position position="1495"/>
    </location>
</feature>
<feature type="sequence variant" description="In strain: GBM/HFS and GBM/FRhK.">
    <original>Y</original>
    <variation>H</variation>
    <location>
        <position position="1500"/>
    </location>
</feature>
<feature type="sequence variant" description="In strain: GBM/HFS and GBM/FRhK.">
    <original>P</original>
    <variation>T</variation>
    <location>
        <position position="1521"/>
    </location>
</feature>
<feature type="sequence variant" description="In strain: GBM/FRhK.">
    <original>G</original>
    <variation>D</variation>
    <location>
        <position position="1652"/>
    </location>
</feature>
<feature type="sequence variant" description="In strain: GBM/FRhK.">
    <original>T</original>
    <variation>S</variation>
    <location>
        <position position="1661"/>
    </location>
</feature>
<feature type="sequence variant" description="In strain: GBM/HFS.">
    <original>S</original>
    <variation>T</variation>
    <location>
        <position position="1746"/>
    </location>
</feature>
<feature type="sequence variant" description="In strain: GBM/HFS and GBM/FRhK.">
    <original>L</original>
    <variation>M</variation>
    <location>
        <position position="1778"/>
    </location>
</feature>
<feature type="sequence variant" description="In strain: GBM/HFS.">
    <original>Y</original>
    <variation>C</variation>
    <location>
        <position position="2035"/>
    </location>
</feature>
<feature type="sequence variant" description="In strain: GBM/HFS and GBM/FRhK.">
    <original>G</original>
    <variation>S</variation>
    <location>
        <position position="2164"/>
    </location>
</feature>
<dbReference type="EC" id="3.6.1.15"/>
<dbReference type="EC" id="3.4.22.28" evidence="4"/>
<dbReference type="EC" id="2.7.7.48" evidence="4"/>
<dbReference type="EMBL" id="X75214">
    <property type="protein sequence ID" value="CAA53024.1"/>
    <property type="molecule type" value="Genomic_RNA"/>
</dbReference>
<dbReference type="EMBL" id="X75215">
    <property type="protein sequence ID" value="CAA53025.1"/>
    <property type="molecule type" value="Genomic_RNA"/>
</dbReference>
<dbReference type="EMBL" id="X75216">
    <property type="protein sequence ID" value="CAA53026.1"/>
    <property type="molecule type" value="Genomic_RNA"/>
</dbReference>
<dbReference type="SMR" id="Q67825"/>
<dbReference type="MEROPS" id="C03.005"/>
<dbReference type="Proteomes" id="UP000007900">
    <property type="component" value="Genome"/>
</dbReference>
<dbReference type="Proteomes" id="UP000180707">
    <property type="component" value="Genome"/>
</dbReference>
<dbReference type="Proteomes" id="UP000180726">
    <property type="component" value="Genome"/>
</dbReference>
<dbReference type="GO" id="GO:0044162">
    <property type="term" value="C:host cell cytoplasmic vesicle membrane"/>
    <property type="evidence" value="ECO:0007669"/>
    <property type="project" value="UniProtKB-SubCell"/>
</dbReference>
<dbReference type="GO" id="GO:0044193">
    <property type="term" value="C:host cell mitochondrial outer membrane"/>
    <property type="evidence" value="ECO:0007669"/>
    <property type="project" value="UniProtKB-SubCell"/>
</dbReference>
<dbReference type="GO" id="GO:0072494">
    <property type="term" value="C:host multivesicular body"/>
    <property type="evidence" value="ECO:0007669"/>
    <property type="project" value="UniProtKB-SubCell"/>
</dbReference>
<dbReference type="GO" id="GO:0016020">
    <property type="term" value="C:membrane"/>
    <property type="evidence" value="ECO:0007669"/>
    <property type="project" value="UniProtKB-KW"/>
</dbReference>
<dbReference type="GO" id="GO:0039618">
    <property type="term" value="C:T=pseudo3 icosahedral viral capsid"/>
    <property type="evidence" value="ECO:0007669"/>
    <property type="project" value="UniProtKB-KW"/>
</dbReference>
<dbReference type="GO" id="GO:0005524">
    <property type="term" value="F:ATP binding"/>
    <property type="evidence" value="ECO:0007669"/>
    <property type="project" value="UniProtKB-KW"/>
</dbReference>
<dbReference type="GO" id="GO:0015267">
    <property type="term" value="F:channel activity"/>
    <property type="evidence" value="ECO:0007669"/>
    <property type="project" value="UniProtKB-KW"/>
</dbReference>
<dbReference type="GO" id="GO:0004197">
    <property type="term" value="F:cysteine-type endopeptidase activity"/>
    <property type="evidence" value="ECO:0007669"/>
    <property type="project" value="UniProtKB-EC"/>
</dbReference>
<dbReference type="GO" id="GO:0017111">
    <property type="term" value="F:ribonucleoside triphosphate phosphatase activity"/>
    <property type="evidence" value="ECO:0007669"/>
    <property type="project" value="UniProtKB-EC"/>
</dbReference>
<dbReference type="GO" id="GO:0003723">
    <property type="term" value="F:RNA binding"/>
    <property type="evidence" value="ECO:0007669"/>
    <property type="project" value="UniProtKB-KW"/>
</dbReference>
<dbReference type="GO" id="GO:0003724">
    <property type="term" value="F:RNA helicase activity"/>
    <property type="evidence" value="ECO:0007669"/>
    <property type="project" value="InterPro"/>
</dbReference>
<dbReference type="GO" id="GO:0003968">
    <property type="term" value="F:RNA-directed RNA polymerase activity"/>
    <property type="evidence" value="ECO:0007669"/>
    <property type="project" value="UniProtKB-KW"/>
</dbReference>
<dbReference type="GO" id="GO:0005198">
    <property type="term" value="F:structural molecule activity"/>
    <property type="evidence" value="ECO:0007669"/>
    <property type="project" value="InterPro"/>
</dbReference>
<dbReference type="GO" id="GO:0006351">
    <property type="term" value="P:DNA-templated transcription"/>
    <property type="evidence" value="ECO:0007669"/>
    <property type="project" value="InterPro"/>
</dbReference>
<dbReference type="GO" id="GO:0034220">
    <property type="term" value="P:monoatomic ion transmembrane transport"/>
    <property type="evidence" value="ECO:0007669"/>
    <property type="project" value="UniProtKB-KW"/>
</dbReference>
<dbReference type="GO" id="GO:0006508">
    <property type="term" value="P:proteolysis"/>
    <property type="evidence" value="ECO:0007669"/>
    <property type="project" value="UniProtKB-KW"/>
</dbReference>
<dbReference type="GO" id="GO:0046718">
    <property type="term" value="P:symbiont entry into host cell"/>
    <property type="evidence" value="ECO:0007669"/>
    <property type="project" value="UniProtKB-KW"/>
</dbReference>
<dbReference type="GO" id="GO:0039545">
    <property type="term" value="P:symbiont-mediated suppression of host cytoplasmic pattern recognition receptor signaling pathway via inhibition of MAVS activity"/>
    <property type="evidence" value="ECO:0007669"/>
    <property type="project" value="UniProtKB-KW"/>
</dbReference>
<dbReference type="GO" id="GO:0039694">
    <property type="term" value="P:viral RNA genome replication"/>
    <property type="evidence" value="ECO:0007669"/>
    <property type="project" value="InterPro"/>
</dbReference>
<dbReference type="GO" id="GO:0019062">
    <property type="term" value="P:virion attachment to host cell"/>
    <property type="evidence" value="ECO:0007669"/>
    <property type="project" value="UniProtKB-KW"/>
</dbReference>
<dbReference type="CDD" id="cd23215">
    <property type="entry name" value="Hepatovirus_RdRp"/>
    <property type="match status" value="1"/>
</dbReference>
<dbReference type="CDD" id="cd00205">
    <property type="entry name" value="rhv_like"/>
    <property type="match status" value="2"/>
</dbReference>
<dbReference type="FunFam" id="2.60.120.20:FF:000016">
    <property type="entry name" value="Genome polyprotein"/>
    <property type="match status" value="1"/>
</dbReference>
<dbReference type="FunFam" id="2.60.120.20:FF:000017">
    <property type="entry name" value="Genome polyprotein"/>
    <property type="match status" value="1"/>
</dbReference>
<dbReference type="FunFam" id="3.30.70.270:FF:000111">
    <property type="entry name" value="Genome polyprotein"/>
    <property type="match status" value="1"/>
</dbReference>
<dbReference type="Gene3D" id="1.20.960.20">
    <property type="match status" value="1"/>
</dbReference>
<dbReference type="Gene3D" id="2.60.120.20">
    <property type="match status" value="3"/>
</dbReference>
<dbReference type="Gene3D" id="3.30.70.270">
    <property type="match status" value="1"/>
</dbReference>
<dbReference type="Gene3D" id="2.40.10.10">
    <property type="entry name" value="Trypsin-like serine proteases"/>
    <property type="match status" value="2"/>
</dbReference>
<dbReference type="InterPro" id="IPR049133">
    <property type="entry name" value="2B_soluble"/>
</dbReference>
<dbReference type="InterPro" id="IPR043502">
    <property type="entry name" value="DNA/RNA_pol_sf"/>
</dbReference>
<dbReference type="InterPro" id="IPR004004">
    <property type="entry name" value="Helic/Pol/Pept_Calicivir-typ"/>
</dbReference>
<dbReference type="InterPro" id="IPR000605">
    <property type="entry name" value="Helicase_SF3_ssDNA/RNA_vir"/>
</dbReference>
<dbReference type="InterPro" id="IPR014759">
    <property type="entry name" value="Helicase_SF3_ssRNA_vir"/>
</dbReference>
<dbReference type="InterPro" id="IPR024354">
    <property type="entry name" value="Hepatitis_A_VP1-2A"/>
</dbReference>
<dbReference type="InterPro" id="IPR044067">
    <property type="entry name" value="PCV_3C_PRO"/>
</dbReference>
<dbReference type="InterPro" id="IPR000199">
    <property type="entry name" value="Peptidase_C3A/C3B_picornavir"/>
</dbReference>
<dbReference type="InterPro" id="IPR009003">
    <property type="entry name" value="Peptidase_S1_PA"/>
</dbReference>
<dbReference type="InterPro" id="IPR043504">
    <property type="entry name" value="Peptidase_S1_PA_chymotrypsin"/>
</dbReference>
<dbReference type="InterPro" id="IPR001676">
    <property type="entry name" value="Picornavirus_capsid"/>
</dbReference>
<dbReference type="InterPro" id="IPR043128">
    <property type="entry name" value="Rev_trsase/Diguanyl_cyclase"/>
</dbReference>
<dbReference type="InterPro" id="IPR033703">
    <property type="entry name" value="Rhv-like"/>
</dbReference>
<dbReference type="InterPro" id="IPR001205">
    <property type="entry name" value="RNA-dir_pol_C"/>
</dbReference>
<dbReference type="InterPro" id="IPR007094">
    <property type="entry name" value="RNA-dir_pol_PSvirus"/>
</dbReference>
<dbReference type="InterPro" id="IPR029053">
    <property type="entry name" value="Viral_coat"/>
</dbReference>
<dbReference type="Pfam" id="PF20758">
    <property type="entry name" value="2B_soluble"/>
    <property type="match status" value="1"/>
</dbReference>
<dbReference type="Pfam" id="PF12944">
    <property type="entry name" value="HAV_VP"/>
    <property type="match status" value="1"/>
</dbReference>
<dbReference type="Pfam" id="PF00548">
    <property type="entry name" value="Peptidase_C3"/>
    <property type="match status" value="1"/>
</dbReference>
<dbReference type="Pfam" id="PF00680">
    <property type="entry name" value="RdRP_1"/>
    <property type="match status" value="1"/>
</dbReference>
<dbReference type="Pfam" id="PF00073">
    <property type="entry name" value="Rhv"/>
    <property type="match status" value="2"/>
</dbReference>
<dbReference type="Pfam" id="PF00910">
    <property type="entry name" value="RNA_helicase"/>
    <property type="match status" value="1"/>
</dbReference>
<dbReference type="PRINTS" id="PR00918">
    <property type="entry name" value="CALICVIRUSNS"/>
</dbReference>
<dbReference type="SUPFAM" id="SSF56672">
    <property type="entry name" value="DNA/RNA polymerases"/>
    <property type="match status" value="1"/>
</dbReference>
<dbReference type="SUPFAM" id="SSF88633">
    <property type="entry name" value="Positive stranded ssRNA viruses"/>
    <property type="match status" value="3"/>
</dbReference>
<dbReference type="SUPFAM" id="SSF50494">
    <property type="entry name" value="Trypsin-like serine proteases"/>
    <property type="match status" value="1"/>
</dbReference>
<dbReference type="PROSITE" id="PS51874">
    <property type="entry name" value="PCV_3C_PRO"/>
    <property type="match status" value="1"/>
</dbReference>
<dbReference type="PROSITE" id="PS50507">
    <property type="entry name" value="RDRP_SSRNA_POS"/>
    <property type="match status" value="1"/>
</dbReference>
<dbReference type="PROSITE" id="PS51218">
    <property type="entry name" value="SF3_HELICASE_2"/>
    <property type="match status" value="1"/>
</dbReference>
<keyword id="KW-0067">ATP-binding</keyword>
<keyword id="KW-0167">Capsid protein</keyword>
<keyword id="KW-0175">Coiled coil</keyword>
<keyword id="KW-0191">Covalent protein-RNA linkage</keyword>
<keyword id="KW-1015">Disulfide bond</keyword>
<keyword id="KW-0347">Helicase</keyword>
<keyword id="KW-1035">Host cytoplasm</keyword>
<keyword id="KW-1036">Host cytoplasmic vesicle</keyword>
<keyword id="KW-1039">Host endosome</keyword>
<keyword id="KW-1043">Host membrane</keyword>
<keyword id="KW-1045">Host mitochondrion</keyword>
<keyword id="KW-1047">Host mitochondrion outer membrane</keyword>
<keyword id="KW-0945">Host-virus interaction</keyword>
<keyword id="KW-0378">Hydrolase</keyword>
<keyword id="KW-1090">Inhibition of host innate immune response by virus</keyword>
<keyword id="KW-1097">Inhibition of host MAVS by virus</keyword>
<keyword id="KW-1113">Inhibition of host RLR pathway by virus</keyword>
<keyword id="KW-0922">Interferon antiviral system evasion</keyword>
<keyword id="KW-0407">Ion channel</keyword>
<keyword id="KW-0406">Ion transport</keyword>
<keyword id="KW-0472">Membrane</keyword>
<keyword id="KW-0547">Nucleotide-binding</keyword>
<keyword id="KW-0548">Nucleotidyltransferase</keyword>
<keyword id="KW-0597">Phosphoprotein</keyword>
<keyword id="KW-0645">Protease</keyword>
<keyword id="KW-0694">RNA-binding</keyword>
<keyword id="KW-0696">RNA-directed RNA polymerase</keyword>
<keyword id="KW-1143">T=pseudo3 icosahedral capsid protein</keyword>
<keyword id="KW-0788">Thiol protease</keyword>
<keyword id="KW-0808">Transferase</keyword>
<keyword id="KW-0812">Transmembrane</keyword>
<keyword id="KW-1133">Transmembrane helix</keyword>
<keyword id="KW-0813">Transport</keyword>
<keyword id="KW-1161">Viral attachment to host cell</keyword>
<keyword id="KW-0899">Viral immunoevasion</keyword>
<keyword id="KW-1182">Viral ion channel</keyword>
<keyword id="KW-0693">Viral RNA replication</keyword>
<keyword id="KW-0946">Virion</keyword>
<keyword id="KW-1160">Virus entry into host cell</keyword>